<keyword id="KW-1185">Reference proteome</keyword>
<keyword id="KW-0687">Ribonucleoprotein</keyword>
<keyword id="KW-0689">Ribosomal protein</keyword>
<keyword id="KW-0694">RNA-binding</keyword>
<keyword id="KW-0699">rRNA-binding</keyword>
<protein>
    <recommendedName>
        <fullName evidence="1">Small ribosomal subunit protein uS11</fullName>
    </recommendedName>
    <alternativeName>
        <fullName evidence="3">30S ribosomal protein S11</fullName>
    </alternativeName>
</protein>
<reference key="1">
    <citation type="journal article" date="2013" name="Stand. Genomic Sci.">
        <title>Complete genome sequence of Arthrobacter sp. strain FB24.</title>
        <authorList>
            <person name="Nakatsu C.H."/>
            <person name="Barabote R."/>
            <person name="Thompson S."/>
            <person name="Bruce D."/>
            <person name="Detter C."/>
            <person name="Brettin T."/>
            <person name="Han C."/>
            <person name="Beasley F."/>
            <person name="Chen W."/>
            <person name="Konopka A."/>
            <person name="Xie G."/>
        </authorList>
    </citation>
    <scope>NUCLEOTIDE SEQUENCE [LARGE SCALE GENOMIC DNA]</scope>
    <source>
        <strain>FB24</strain>
    </source>
</reference>
<evidence type="ECO:0000255" key="1">
    <source>
        <dbReference type="HAMAP-Rule" id="MF_01310"/>
    </source>
</evidence>
<evidence type="ECO:0000256" key="2">
    <source>
        <dbReference type="SAM" id="MobiDB-lite"/>
    </source>
</evidence>
<evidence type="ECO:0000305" key="3"/>
<sequence length="133" mass="14093">MPPKTRGAVRKPRKKDKKNIALGQAHIKSTFNNTIVSITDPNGAVISWASAGEVGFKGSRKSTPFAAQMAAEAAAKRAQEHGLKKVDVFVKGPGSGRETAIRSLQAAGLEVGSIQDVTPAAHNGCRPPKRRRV</sequence>
<feature type="chain" id="PRO_0000294715" description="Small ribosomal subunit protein uS11">
    <location>
        <begin position="1"/>
        <end position="133"/>
    </location>
</feature>
<feature type="region of interest" description="Disordered" evidence="2">
    <location>
        <begin position="1"/>
        <end position="23"/>
    </location>
</feature>
<feature type="compositionally biased region" description="Basic residues" evidence="2">
    <location>
        <begin position="7"/>
        <end position="17"/>
    </location>
</feature>
<organism>
    <name type="scientific">Arthrobacter sp. (strain FB24)</name>
    <dbReference type="NCBI Taxonomy" id="290399"/>
    <lineage>
        <taxon>Bacteria</taxon>
        <taxon>Bacillati</taxon>
        <taxon>Actinomycetota</taxon>
        <taxon>Actinomycetes</taxon>
        <taxon>Micrococcales</taxon>
        <taxon>Micrococcaceae</taxon>
        <taxon>Arthrobacter</taxon>
    </lineage>
</organism>
<accession>A0JZ50</accession>
<dbReference type="EMBL" id="CP000454">
    <property type="protein sequence ID" value="ABK04320.1"/>
    <property type="molecule type" value="Genomic_DNA"/>
</dbReference>
<dbReference type="RefSeq" id="WP_011692779.1">
    <property type="nucleotide sequence ID" value="NC_008541.1"/>
</dbReference>
<dbReference type="SMR" id="A0JZ50"/>
<dbReference type="STRING" id="290399.Arth_2941"/>
<dbReference type="KEGG" id="art:Arth_2941"/>
<dbReference type="eggNOG" id="COG0100">
    <property type="taxonomic scope" value="Bacteria"/>
</dbReference>
<dbReference type="HOGENOM" id="CLU_072439_5_0_11"/>
<dbReference type="OrthoDB" id="9806415at2"/>
<dbReference type="Proteomes" id="UP000000754">
    <property type="component" value="Chromosome"/>
</dbReference>
<dbReference type="GO" id="GO:1990904">
    <property type="term" value="C:ribonucleoprotein complex"/>
    <property type="evidence" value="ECO:0007669"/>
    <property type="project" value="UniProtKB-KW"/>
</dbReference>
<dbReference type="GO" id="GO:0005840">
    <property type="term" value="C:ribosome"/>
    <property type="evidence" value="ECO:0007669"/>
    <property type="project" value="UniProtKB-KW"/>
</dbReference>
<dbReference type="GO" id="GO:0019843">
    <property type="term" value="F:rRNA binding"/>
    <property type="evidence" value="ECO:0007669"/>
    <property type="project" value="UniProtKB-UniRule"/>
</dbReference>
<dbReference type="GO" id="GO:0003735">
    <property type="term" value="F:structural constituent of ribosome"/>
    <property type="evidence" value="ECO:0007669"/>
    <property type="project" value="InterPro"/>
</dbReference>
<dbReference type="GO" id="GO:0006412">
    <property type="term" value="P:translation"/>
    <property type="evidence" value="ECO:0007669"/>
    <property type="project" value="UniProtKB-UniRule"/>
</dbReference>
<dbReference type="FunFam" id="3.30.420.80:FF:000001">
    <property type="entry name" value="30S ribosomal protein S11"/>
    <property type="match status" value="1"/>
</dbReference>
<dbReference type="Gene3D" id="3.30.420.80">
    <property type="entry name" value="Ribosomal protein S11"/>
    <property type="match status" value="1"/>
</dbReference>
<dbReference type="HAMAP" id="MF_01310">
    <property type="entry name" value="Ribosomal_uS11"/>
    <property type="match status" value="1"/>
</dbReference>
<dbReference type="InterPro" id="IPR001971">
    <property type="entry name" value="Ribosomal_uS11"/>
</dbReference>
<dbReference type="InterPro" id="IPR019981">
    <property type="entry name" value="Ribosomal_uS11_bac-type"/>
</dbReference>
<dbReference type="InterPro" id="IPR018102">
    <property type="entry name" value="Ribosomal_uS11_CS"/>
</dbReference>
<dbReference type="InterPro" id="IPR036967">
    <property type="entry name" value="Ribosomal_uS11_sf"/>
</dbReference>
<dbReference type="NCBIfam" id="NF003698">
    <property type="entry name" value="PRK05309.1"/>
    <property type="match status" value="1"/>
</dbReference>
<dbReference type="NCBIfam" id="TIGR03632">
    <property type="entry name" value="uS11_bact"/>
    <property type="match status" value="1"/>
</dbReference>
<dbReference type="PANTHER" id="PTHR11759">
    <property type="entry name" value="40S RIBOSOMAL PROTEIN S14/30S RIBOSOMAL PROTEIN S11"/>
    <property type="match status" value="1"/>
</dbReference>
<dbReference type="Pfam" id="PF00411">
    <property type="entry name" value="Ribosomal_S11"/>
    <property type="match status" value="1"/>
</dbReference>
<dbReference type="PIRSF" id="PIRSF002131">
    <property type="entry name" value="Ribosomal_S11"/>
    <property type="match status" value="1"/>
</dbReference>
<dbReference type="SUPFAM" id="SSF53137">
    <property type="entry name" value="Translational machinery components"/>
    <property type="match status" value="1"/>
</dbReference>
<dbReference type="PROSITE" id="PS00054">
    <property type="entry name" value="RIBOSOMAL_S11"/>
    <property type="match status" value="1"/>
</dbReference>
<proteinExistence type="inferred from homology"/>
<comment type="function">
    <text evidence="1">Located on the platform of the 30S subunit, it bridges several disparate RNA helices of the 16S rRNA. Forms part of the Shine-Dalgarno cleft in the 70S ribosome.</text>
</comment>
<comment type="subunit">
    <text evidence="1">Part of the 30S ribosomal subunit. Interacts with proteins S7 and S18. Binds to IF-3.</text>
</comment>
<comment type="similarity">
    <text evidence="1">Belongs to the universal ribosomal protein uS11 family.</text>
</comment>
<name>RS11_ARTS2</name>
<gene>
    <name evidence="1" type="primary">rpsK</name>
    <name type="ordered locus">Arth_2941</name>
</gene>